<protein>
    <recommendedName>
        <fullName>Deoxyribonuclease-2-beta</fullName>
        <ecNumber>3.1.22.1</ecNumber>
    </recommendedName>
    <alternativeName>
        <fullName>DNase II-like acid DNase</fullName>
    </alternativeName>
    <alternativeName>
        <fullName>DNase2-like acid DNase</fullName>
    </alternativeName>
    <alternativeName>
        <fullName>Deoxyribonuclease II beta</fullName>
        <shortName>DNase II beta</shortName>
    </alternativeName>
    <alternativeName>
        <fullName>Endonuclease DLAD</fullName>
    </alternativeName>
</protein>
<reference key="1">
    <citation type="journal article" date="2001" name="Biochem. Biophys. Res. Commun.">
        <title>Isolation and characterization of the DLAD/Dlad genes, which lie head-to-head with the genes for urate oxidase.</title>
        <authorList>
            <person name="Shiokawa D."/>
            <person name="Tanuma S."/>
        </authorList>
    </citation>
    <scope>NUCLEOTIDE SEQUENCE [GENOMIC DNA / MRNA] (ISOFORMS 1 AND 2)</scope>
    <scope>FUNCTION</scope>
    <scope>TISSUE SPECIFICITY</scope>
    <source>
        <tissue>Lung</tissue>
    </source>
</reference>
<reference key="2">
    <citation type="journal article" date="2001" name="Gene">
        <title>The cloning, genomic structure, localization, and expression of human deoxyribonuclease IIbeta.</title>
        <authorList>
            <person name="Krieser R.J."/>
            <person name="MacLea K.S."/>
            <person name="Park J.P."/>
            <person name="Eastman A."/>
        </authorList>
    </citation>
    <scope>NUCLEOTIDE SEQUENCE [MRNA] (ISOFORM 1)</scope>
    <scope>TISSUE SPECIFICITY</scope>
</reference>
<reference key="3">
    <citation type="journal article" date="2006" name="Nature">
        <title>The DNA sequence and biological annotation of human chromosome 1.</title>
        <authorList>
            <person name="Gregory S.G."/>
            <person name="Barlow K.F."/>
            <person name="McLay K.E."/>
            <person name="Kaul R."/>
            <person name="Swarbreck D."/>
            <person name="Dunham A."/>
            <person name="Scott C.E."/>
            <person name="Howe K.L."/>
            <person name="Woodfine K."/>
            <person name="Spencer C.C.A."/>
            <person name="Jones M.C."/>
            <person name="Gillson C."/>
            <person name="Searle S."/>
            <person name="Zhou Y."/>
            <person name="Kokocinski F."/>
            <person name="McDonald L."/>
            <person name="Evans R."/>
            <person name="Phillips K."/>
            <person name="Atkinson A."/>
            <person name="Cooper R."/>
            <person name="Jones C."/>
            <person name="Hall R.E."/>
            <person name="Andrews T.D."/>
            <person name="Lloyd C."/>
            <person name="Ainscough R."/>
            <person name="Almeida J.P."/>
            <person name="Ambrose K.D."/>
            <person name="Anderson F."/>
            <person name="Andrew R.W."/>
            <person name="Ashwell R.I.S."/>
            <person name="Aubin K."/>
            <person name="Babbage A.K."/>
            <person name="Bagguley C.L."/>
            <person name="Bailey J."/>
            <person name="Beasley H."/>
            <person name="Bethel G."/>
            <person name="Bird C.P."/>
            <person name="Bray-Allen S."/>
            <person name="Brown J.Y."/>
            <person name="Brown A.J."/>
            <person name="Buckley D."/>
            <person name="Burton J."/>
            <person name="Bye J."/>
            <person name="Carder C."/>
            <person name="Chapman J.C."/>
            <person name="Clark S.Y."/>
            <person name="Clarke G."/>
            <person name="Clee C."/>
            <person name="Cobley V."/>
            <person name="Collier R.E."/>
            <person name="Corby N."/>
            <person name="Coville G.J."/>
            <person name="Davies J."/>
            <person name="Deadman R."/>
            <person name="Dunn M."/>
            <person name="Earthrowl M."/>
            <person name="Ellington A.G."/>
            <person name="Errington H."/>
            <person name="Frankish A."/>
            <person name="Frankland J."/>
            <person name="French L."/>
            <person name="Garner P."/>
            <person name="Garnett J."/>
            <person name="Gay L."/>
            <person name="Ghori M.R.J."/>
            <person name="Gibson R."/>
            <person name="Gilby L.M."/>
            <person name="Gillett W."/>
            <person name="Glithero R.J."/>
            <person name="Grafham D.V."/>
            <person name="Griffiths C."/>
            <person name="Griffiths-Jones S."/>
            <person name="Grocock R."/>
            <person name="Hammond S."/>
            <person name="Harrison E.S.I."/>
            <person name="Hart E."/>
            <person name="Haugen E."/>
            <person name="Heath P.D."/>
            <person name="Holmes S."/>
            <person name="Holt K."/>
            <person name="Howden P.J."/>
            <person name="Hunt A.R."/>
            <person name="Hunt S.E."/>
            <person name="Hunter G."/>
            <person name="Isherwood J."/>
            <person name="James R."/>
            <person name="Johnson C."/>
            <person name="Johnson D."/>
            <person name="Joy A."/>
            <person name="Kay M."/>
            <person name="Kershaw J.K."/>
            <person name="Kibukawa M."/>
            <person name="Kimberley A.M."/>
            <person name="King A."/>
            <person name="Knights A.J."/>
            <person name="Lad H."/>
            <person name="Laird G."/>
            <person name="Lawlor S."/>
            <person name="Leongamornlert D.A."/>
            <person name="Lloyd D.M."/>
            <person name="Loveland J."/>
            <person name="Lovell J."/>
            <person name="Lush M.J."/>
            <person name="Lyne R."/>
            <person name="Martin S."/>
            <person name="Mashreghi-Mohammadi M."/>
            <person name="Matthews L."/>
            <person name="Matthews N.S.W."/>
            <person name="McLaren S."/>
            <person name="Milne S."/>
            <person name="Mistry S."/>
            <person name="Moore M.J.F."/>
            <person name="Nickerson T."/>
            <person name="O'Dell C.N."/>
            <person name="Oliver K."/>
            <person name="Palmeiri A."/>
            <person name="Palmer S.A."/>
            <person name="Parker A."/>
            <person name="Patel D."/>
            <person name="Pearce A.V."/>
            <person name="Peck A.I."/>
            <person name="Pelan S."/>
            <person name="Phelps K."/>
            <person name="Phillimore B.J."/>
            <person name="Plumb R."/>
            <person name="Rajan J."/>
            <person name="Raymond C."/>
            <person name="Rouse G."/>
            <person name="Saenphimmachak C."/>
            <person name="Sehra H.K."/>
            <person name="Sheridan E."/>
            <person name="Shownkeen R."/>
            <person name="Sims S."/>
            <person name="Skuce C.D."/>
            <person name="Smith M."/>
            <person name="Steward C."/>
            <person name="Subramanian S."/>
            <person name="Sycamore N."/>
            <person name="Tracey A."/>
            <person name="Tromans A."/>
            <person name="Van Helmond Z."/>
            <person name="Wall M."/>
            <person name="Wallis J.M."/>
            <person name="White S."/>
            <person name="Whitehead S.L."/>
            <person name="Wilkinson J.E."/>
            <person name="Willey D.L."/>
            <person name="Williams H."/>
            <person name="Wilming L."/>
            <person name="Wray P.W."/>
            <person name="Wu Z."/>
            <person name="Coulson A."/>
            <person name="Vaudin M."/>
            <person name="Sulston J.E."/>
            <person name="Durbin R.M."/>
            <person name="Hubbard T."/>
            <person name="Wooster R."/>
            <person name="Dunham I."/>
            <person name="Carter N.P."/>
            <person name="McVean G."/>
            <person name="Ross M.T."/>
            <person name="Harrow J."/>
            <person name="Olson M.V."/>
            <person name="Beck S."/>
            <person name="Rogers J."/>
            <person name="Bentley D.R."/>
        </authorList>
    </citation>
    <scope>NUCLEOTIDE SEQUENCE [LARGE SCALE GENOMIC DNA]</scope>
</reference>
<reference key="4">
    <citation type="submission" date="2005-09" db="EMBL/GenBank/DDBJ databases">
        <authorList>
            <person name="Mural R.J."/>
            <person name="Istrail S."/>
            <person name="Sutton G.G."/>
            <person name="Florea L."/>
            <person name="Halpern A.L."/>
            <person name="Mobarry C.M."/>
            <person name="Lippert R."/>
            <person name="Walenz B."/>
            <person name="Shatkay H."/>
            <person name="Dew I."/>
            <person name="Miller J.R."/>
            <person name="Flanigan M.J."/>
            <person name="Edwards N.J."/>
            <person name="Bolanos R."/>
            <person name="Fasulo D."/>
            <person name="Halldorsson B.V."/>
            <person name="Hannenhalli S."/>
            <person name="Turner R."/>
            <person name="Yooseph S."/>
            <person name="Lu F."/>
            <person name="Nusskern D.R."/>
            <person name="Shue B.C."/>
            <person name="Zheng X.H."/>
            <person name="Zhong F."/>
            <person name="Delcher A.L."/>
            <person name="Huson D.H."/>
            <person name="Kravitz S.A."/>
            <person name="Mouchard L."/>
            <person name="Reinert K."/>
            <person name="Remington K.A."/>
            <person name="Clark A.G."/>
            <person name="Waterman M.S."/>
            <person name="Eichler E.E."/>
            <person name="Adams M.D."/>
            <person name="Hunkapiller M.W."/>
            <person name="Myers E.W."/>
            <person name="Venter J.C."/>
        </authorList>
    </citation>
    <scope>NUCLEOTIDE SEQUENCE [LARGE SCALE GENOMIC DNA]</scope>
</reference>
<reference key="5">
    <citation type="journal article" date="2003" name="Nature">
        <title>Nuclear cataract caused by a lack of DNA degradation in the mouse eye lens.</title>
        <authorList>
            <person name="Nishimoto S."/>
            <person name="Kawane K."/>
            <person name="Watanabe-Fukunaga R."/>
            <person name="Fukuyama H."/>
            <person name="Ohsawa Y."/>
            <person name="Uchiyama Y."/>
            <person name="Hashida N."/>
            <person name="Ohguro N."/>
            <person name="Tano Y."/>
            <person name="Morimoto T."/>
            <person name="Fukuda Y."/>
            <person name="Nagata S."/>
        </authorList>
    </citation>
    <scope>FUNCTION</scope>
    <scope>TISSUE SPECIFICITY</scope>
</reference>
<dbReference type="EC" id="3.1.22.1"/>
<dbReference type="EMBL" id="AF333389">
    <property type="protein sequence ID" value="AAL34448.1"/>
    <property type="molecule type" value="mRNA"/>
</dbReference>
<dbReference type="EMBL" id="AF334602">
    <property type="protein sequence ID" value="AAL34449.1"/>
    <property type="molecule type" value="Genomic_DNA"/>
</dbReference>
<dbReference type="EMBL" id="AF274571">
    <property type="protein sequence ID" value="AAF76893.1"/>
    <property type="status" value="ALT_INIT"/>
    <property type="molecule type" value="mRNA"/>
</dbReference>
<dbReference type="EMBL" id="AL359273">
    <property type="status" value="NOT_ANNOTATED_CDS"/>
    <property type="molecule type" value="Genomic_DNA"/>
</dbReference>
<dbReference type="EMBL" id="CH471097">
    <property type="protein sequence ID" value="EAW73238.1"/>
    <property type="molecule type" value="Genomic_DNA"/>
</dbReference>
<dbReference type="EMBL" id="CH471097">
    <property type="protein sequence ID" value="EAW73239.1"/>
    <property type="molecule type" value="Genomic_DNA"/>
</dbReference>
<dbReference type="CCDS" id="CCDS44167.1">
    <molecule id="Q8WZ79-1"/>
</dbReference>
<dbReference type="CCDS" id="CCDS694.1">
    <molecule id="Q8WZ79-2"/>
</dbReference>
<dbReference type="RefSeq" id="NP_067056.2">
    <molecule id="Q8WZ79-1"/>
    <property type="nucleotide sequence ID" value="NM_021233.3"/>
</dbReference>
<dbReference type="RefSeq" id="NP_490649.1">
    <molecule id="Q8WZ79-2"/>
    <property type="nucleotide sequence ID" value="NM_058248.2"/>
</dbReference>
<dbReference type="RefSeq" id="XP_011540180.1">
    <molecule id="Q8WZ79-2"/>
    <property type="nucleotide sequence ID" value="XM_011541878.3"/>
</dbReference>
<dbReference type="RefSeq" id="XP_054193975.1">
    <molecule id="Q8WZ79-2"/>
    <property type="nucleotide sequence ID" value="XM_054338000.1"/>
</dbReference>
<dbReference type="SMR" id="Q8WZ79"/>
<dbReference type="BioGRID" id="121838">
    <property type="interactions" value="45"/>
</dbReference>
<dbReference type="FunCoup" id="Q8WZ79">
    <property type="interactions" value="261"/>
</dbReference>
<dbReference type="IntAct" id="Q8WZ79">
    <property type="interactions" value="23"/>
</dbReference>
<dbReference type="STRING" id="9606.ENSP00000359699"/>
<dbReference type="GlyCosmos" id="Q8WZ79">
    <property type="glycosylation" value="4 sites, No reported glycans"/>
</dbReference>
<dbReference type="GlyGen" id="Q8WZ79">
    <property type="glycosylation" value="4 sites"/>
</dbReference>
<dbReference type="iPTMnet" id="Q8WZ79"/>
<dbReference type="PhosphoSitePlus" id="Q8WZ79"/>
<dbReference type="BioMuta" id="DNASE2B"/>
<dbReference type="DMDM" id="46395921"/>
<dbReference type="PaxDb" id="9606-ENSP00000359699"/>
<dbReference type="PeptideAtlas" id="Q8WZ79"/>
<dbReference type="ProteomicsDB" id="75235">
    <molecule id="Q8WZ79-1"/>
</dbReference>
<dbReference type="ProteomicsDB" id="75236">
    <molecule id="Q8WZ79-2"/>
</dbReference>
<dbReference type="Antibodypedia" id="19765">
    <property type="antibodies" value="95 antibodies from 20 providers"/>
</dbReference>
<dbReference type="DNASU" id="58511"/>
<dbReference type="Ensembl" id="ENST00000370662.3">
    <molecule id="Q8WZ79-2"/>
    <property type="protein sequence ID" value="ENSP00000359696.3"/>
    <property type="gene ID" value="ENSG00000137976.8"/>
</dbReference>
<dbReference type="Ensembl" id="ENST00000370665.4">
    <molecule id="Q8WZ79-1"/>
    <property type="protein sequence ID" value="ENSP00000359699.3"/>
    <property type="gene ID" value="ENSG00000137976.8"/>
</dbReference>
<dbReference type="GeneID" id="58511"/>
<dbReference type="KEGG" id="hsa:58511"/>
<dbReference type="MANE-Select" id="ENST00000370665.4">
    <property type="protein sequence ID" value="ENSP00000359699.3"/>
    <property type="RefSeq nucleotide sequence ID" value="NM_021233.3"/>
    <property type="RefSeq protein sequence ID" value="NP_067056.2"/>
</dbReference>
<dbReference type="UCSC" id="uc001djt.2">
    <molecule id="Q8WZ79-1"/>
    <property type="organism name" value="human"/>
</dbReference>
<dbReference type="AGR" id="HGNC:28875"/>
<dbReference type="CTD" id="58511"/>
<dbReference type="DisGeNET" id="58511"/>
<dbReference type="GeneCards" id="DNASE2B"/>
<dbReference type="HGNC" id="HGNC:28875">
    <property type="gene designation" value="DNASE2B"/>
</dbReference>
<dbReference type="HPA" id="ENSG00000137976">
    <property type="expression patterns" value="Tissue enriched (salivary)"/>
</dbReference>
<dbReference type="MIM" id="608057">
    <property type="type" value="gene"/>
</dbReference>
<dbReference type="neXtProt" id="NX_Q8WZ79"/>
<dbReference type="OpenTargets" id="ENSG00000137976"/>
<dbReference type="PharmGKB" id="PA134993904"/>
<dbReference type="VEuPathDB" id="HostDB:ENSG00000137976"/>
<dbReference type="eggNOG" id="KOG3825">
    <property type="taxonomic scope" value="Eukaryota"/>
</dbReference>
<dbReference type="GeneTree" id="ENSGT00390000002634"/>
<dbReference type="HOGENOM" id="CLU_053867_0_1_1"/>
<dbReference type="InParanoid" id="Q8WZ79"/>
<dbReference type="OMA" id="HMPQLCA"/>
<dbReference type="OrthoDB" id="10261598at2759"/>
<dbReference type="PAN-GO" id="Q8WZ79">
    <property type="GO annotations" value="2 GO annotations based on evolutionary models"/>
</dbReference>
<dbReference type="PhylomeDB" id="Q8WZ79"/>
<dbReference type="TreeFam" id="TF314536"/>
<dbReference type="BRENDA" id="3.1.22.1">
    <property type="organism ID" value="2681"/>
</dbReference>
<dbReference type="PathwayCommons" id="Q8WZ79"/>
<dbReference type="SignaLink" id="Q8WZ79"/>
<dbReference type="SIGNOR" id="Q8WZ79"/>
<dbReference type="BioGRID-ORCS" id="58511">
    <property type="hits" value="13 hits in 1143 CRISPR screens"/>
</dbReference>
<dbReference type="GenomeRNAi" id="58511"/>
<dbReference type="Pharos" id="Q8WZ79">
    <property type="development level" value="Tbio"/>
</dbReference>
<dbReference type="PRO" id="PR:Q8WZ79"/>
<dbReference type="Proteomes" id="UP000005640">
    <property type="component" value="Chromosome 1"/>
</dbReference>
<dbReference type="RNAct" id="Q8WZ79">
    <property type="molecule type" value="protein"/>
</dbReference>
<dbReference type="Bgee" id="ENSG00000137976">
    <property type="expression patterns" value="Expressed in parotid gland and 76 other cell types or tissues"/>
</dbReference>
<dbReference type="GO" id="GO:0005576">
    <property type="term" value="C:extracellular region"/>
    <property type="evidence" value="ECO:0007669"/>
    <property type="project" value="Ensembl"/>
</dbReference>
<dbReference type="GO" id="GO:0005764">
    <property type="term" value="C:lysosome"/>
    <property type="evidence" value="ECO:0007669"/>
    <property type="project" value="UniProtKB-SubCell"/>
</dbReference>
<dbReference type="GO" id="GO:0004531">
    <property type="term" value="F:deoxyribonuclease II activity"/>
    <property type="evidence" value="ECO:0000318"/>
    <property type="project" value="GO_Central"/>
</dbReference>
<dbReference type="GO" id="GO:0006309">
    <property type="term" value="P:apoptotic DNA fragmentation"/>
    <property type="evidence" value="ECO:0000318"/>
    <property type="project" value="GO_Central"/>
</dbReference>
<dbReference type="CDD" id="cd09190">
    <property type="entry name" value="PLDc_DNaseII_beta_1"/>
    <property type="match status" value="1"/>
</dbReference>
<dbReference type="CDD" id="cd09192">
    <property type="entry name" value="PLDc_DNaseII_beta_2"/>
    <property type="match status" value="1"/>
</dbReference>
<dbReference type="InterPro" id="IPR004947">
    <property type="entry name" value="DNase_II"/>
</dbReference>
<dbReference type="PANTHER" id="PTHR10858">
    <property type="entry name" value="DEOXYRIBONUCLEASE II"/>
    <property type="match status" value="1"/>
</dbReference>
<dbReference type="PANTHER" id="PTHR10858:SF2">
    <property type="entry name" value="DEOXYRIBONUCLEASE-2-BETA"/>
    <property type="match status" value="1"/>
</dbReference>
<dbReference type="Pfam" id="PF03265">
    <property type="entry name" value="DNase_II"/>
    <property type="match status" value="1"/>
</dbReference>
<feature type="signal peptide" evidence="1">
    <location>
        <begin position="1"/>
        <end position="27"/>
    </location>
</feature>
<feature type="chain" id="PRO_0000007295" description="Deoxyribonuclease-2-beta">
    <location>
        <begin position="28"/>
        <end position="361"/>
    </location>
</feature>
<feature type="glycosylation site" description="N-linked (GlcNAc...) asparagine" evidence="1">
    <location>
        <position position="81"/>
    </location>
</feature>
<feature type="glycosylation site" description="N-linked (GlcNAc...) asparagine" evidence="1">
    <location>
        <position position="103"/>
    </location>
</feature>
<feature type="glycosylation site" description="N-linked (GlcNAc...) asparagine" evidence="1">
    <location>
        <position position="119"/>
    </location>
</feature>
<feature type="glycosylation site" description="N-linked (GlcNAc...) asparagine" evidence="1">
    <location>
        <position position="278"/>
    </location>
</feature>
<feature type="splice variant" id="VSP_009812" description="In isoform 2." evidence="5">
    <location>
        <begin position="1"/>
        <end position="208"/>
    </location>
</feature>
<feature type="sequence variant" id="VAR_059250" description="In dbSNP:rs3738573.">
    <original>Q</original>
    <variation>H</variation>
    <location>
        <position position="3"/>
    </location>
</feature>
<feature type="sequence variant" id="VAR_048872" description="In dbSNP:rs3754274.">
    <original>K</original>
    <variation>R</variation>
    <location>
        <position position="47"/>
    </location>
</feature>
<feature type="sequence variant" id="VAR_059251" description="In dbSNP:rs3754274.">
    <original>R</original>
    <variation>K</variation>
    <location>
        <position position="51"/>
    </location>
</feature>
<comment type="function">
    <text evidence="3 4">Hydrolyzes DNA under acidic conditions. Does not require divalent cations for activity. Participates in the degradation of nuclear DNA during lens cell differentiation.</text>
</comment>
<comment type="catalytic activity">
    <reaction>
        <text>Endonucleolytic cleavage to nucleoside 3'-phosphates and 3'-phosphooligonucleotide end-products.</text>
        <dbReference type="EC" id="3.1.22.1"/>
    </reaction>
</comment>
<comment type="subcellular location">
    <subcellularLocation>
        <location evidence="6">Lysosome</location>
    </subcellularLocation>
</comment>
<comment type="alternative products">
    <event type="alternative splicing"/>
    <isoform>
        <id>Q8WZ79-1</id>
        <name>1</name>
        <sequence type="displayed"/>
    </isoform>
    <isoform>
        <id>Q8WZ79-2</id>
        <name>2</name>
        <sequence type="described" ref="VSP_009812"/>
    </isoform>
</comment>
<comment type="tissue specificity">
    <text evidence="2 3 4">Highly expressed in the eye lens and in salivary gland. Detected at lower levels in lung, prostate and lymph node. Isoform 2 is lung specific.</text>
</comment>
<comment type="similarity">
    <text evidence="6">Belongs to the DNase II family.</text>
</comment>
<comment type="sequence caution" evidence="6">
    <conflict type="erroneous initiation">
        <sequence resource="EMBL-CDS" id="AAF76893"/>
    </conflict>
</comment>
<organism>
    <name type="scientific">Homo sapiens</name>
    <name type="common">Human</name>
    <dbReference type="NCBI Taxonomy" id="9606"/>
    <lineage>
        <taxon>Eukaryota</taxon>
        <taxon>Metazoa</taxon>
        <taxon>Chordata</taxon>
        <taxon>Craniata</taxon>
        <taxon>Vertebrata</taxon>
        <taxon>Euteleostomi</taxon>
        <taxon>Mammalia</taxon>
        <taxon>Eutheria</taxon>
        <taxon>Euarchontoglires</taxon>
        <taxon>Primates</taxon>
        <taxon>Haplorrhini</taxon>
        <taxon>Catarrhini</taxon>
        <taxon>Hominidae</taxon>
        <taxon>Homo</taxon>
    </lineage>
</organism>
<name>DNS2B_HUMAN</name>
<accession>Q8WZ79</accession>
<accession>Q5VXD0</accession>
<accession>Q5VXD1</accession>
<accession>Q8WZ80</accession>
<accession>Q9NQW3</accession>
<sequence>MKQKMMARLLRTSFALLFLGLFGVLGAATISCRNEEGKAVDWFTFYKLPKRQNKESGETGLEYLYLDSTTRSWRKSEQLMNDTKSVLGRTLQQLYEAYASKSNNTAYLIYNDGVPKPVNYSRKYGHTKGLLLWNRVQGFWLIHSIPQFPPIPEEGYDYPPTGRRNGQSGICITFKYNQYEAIDSQLLVCNPNVYSCSIPATFHQELIHMPQLCTRASSSEIPGRLLTTLQSAQGQKFLHFAKSDSFLDDIFAAWMAQRLKTHLLTETWQRKRQELPSNCSLPYHVYNIKAIKLSRHSYFSSYQDHAKWCISQKGTKNRWTCIGDLNRSPHQAFRSGGFICTQNWQIYQAFQGLVLYYESCK</sequence>
<proteinExistence type="evidence at transcript level"/>
<gene>
    <name type="primary">DNASE2B</name>
    <name type="synonym">DLAD</name>
</gene>
<keyword id="KW-0025">Alternative splicing</keyword>
<keyword id="KW-0255">Endonuclease</keyword>
<keyword id="KW-0325">Glycoprotein</keyword>
<keyword id="KW-0378">Hydrolase</keyword>
<keyword id="KW-0458">Lysosome</keyword>
<keyword id="KW-0540">Nuclease</keyword>
<keyword id="KW-1185">Reference proteome</keyword>
<keyword id="KW-0732">Signal</keyword>
<evidence type="ECO:0000255" key="1"/>
<evidence type="ECO:0000269" key="2">
    <source>
    </source>
</evidence>
<evidence type="ECO:0000269" key="3">
    <source>
    </source>
</evidence>
<evidence type="ECO:0000269" key="4">
    <source>
    </source>
</evidence>
<evidence type="ECO:0000303" key="5">
    <source>
    </source>
</evidence>
<evidence type="ECO:0000305" key="6"/>